<proteinExistence type="evidence at protein level"/>
<keyword id="KW-0903">Direct protein sequencing</keyword>
<keyword id="KW-0274">FAD</keyword>
<keyword id="KW-0285">Flavoprotein</keyword>
<keyword id="KW-0547">Nucleotide-binding</keyword>
<keyword id="KW-0560">Oxidoreductase</keyword>
<organism>
    <name type="scientific">Alcaligenes sp</name>
    <dbReference type="NCBI Taxonomy" id="512"/>
    <lineage>
        <taxon>Bacteria</taxon>
        <taxon>Pseudomonadati</taxon>
        <taxon>Pseudomonadota</taxon>
        <taxon>Betaproteobacteria</taxon>
        <taxon>Burkholderiales</taxon>
        <taxon>Alcaligenaceae</taxon>
        <taxon>Alcaligenes</taxon>
    </lineage>
</organism>
<evidence type="ECO:0000250" key="1">
    <source>
        <dbReference type="UniProtKB" id="Q7X2H8"/>
    </source>
</evidence>
<evidence type="ECO:0000269" key="2">
    <source>
    </source>
</evidence>
<evidence type="ECO:0000303" key="3">
    <source>
    </source>
</evidence>
<protein>
    <recommendedName>
        <fullName evidence="3">Choline oxidase</fullName>
        <ecNumber evidence="2">1.1.3.17</ecNumber>
    </recommendedName>
</protein>
<sequence>DNPNHSR</sequence>
<dbReference type="EC" id="1.1.3.17" evidence="2"/>
<dbReference type="PIR" id="A15398">
    <property type="entry name" value="A15398"/>
</dbReference>
<dbReference type="BRENDA" id="1.1.3.17">
    <property type="organism ID" value="236"/>
</dbReference>
<dbReference type="UniPathway" id="UPA00529">
    <property type="reaction ID" value="UER00384"/>
</dbReference>
<dbReference type="GO" id="GO:0033713">
    <property type="term" value="F:choline:oxygen 1-oxidoreductase activity"/>
    <property type="evidence" value="ECO:0007669"/>
    <property type="project" value="UniProtKB-EC"/>
</dbReference>
<dbReference type="GO" id="GO:0000166">
    <property type="term" value="F:nucleotide binding"/>
    <property type="evidence" value="ECO:0007669"/>
    <property type="project" value="UniProtKB-KW"/>
</dbReference>
<dbReference type="GO" id="GO:0019285">
    <property type="term" value="P:glycine betaine biosynthetic process from choline"/>
    <property type="evidence" value="ECO:0007669"/>
    <property type="project" value="UniProtKB-UniPathway"/>
</dbReference>
<accession>P16101</accession>
<name>CHOX_ALCSP</name>
<reference key="1">
    <citation type="journal article" date="1980" name="J. Biochem.">
        <title>Identification and properties of the prosthetic group of choline oxidase from Alcaligenes sp.</title>
        <authorList>
            <person name="Ohta-Fukuyama M."/>
            <person name="Miyake Y."/>
            <person name="Emi S."/>
            <person name="Yamano T."/>
        </authorList>
    </citation>
    <scope>PROTEIN SEQUENCE</scope>
    <scope>FUNCTION</scope>
    <scope>CATALYTIC ACTIVITY</scope>
    <scope>COFACTOR</scope>
    <scope>BIOPHYSICOCHEMICAL PROPERTIES</scope>
</reference>
<feature type="chain" id="PRO_0000089648" description="Choline oxidase">
    <location>
        <begin position="1" status="less than"/>
        <end position="7" status="greater than"/>
    </location>
</feature>
<feature type="modified residue" description="Tele-8alpha-FAD histidine" evidence="2">
    <location>
        <position position="5"/>
    </location>
</feature>
<feature type="non-terminal residue">
    <location>
        <position position="1"/>
    </location>
</feature>
<feature type="non-terminal residue">
    <location>
        <position position="7"/>
    </location>
</feature>
<comment type="function">
    <text evidence="1 2">Oxidizes choline to betaine, probably via two successive reactions with betaine aldehyde as an intermediate (PubMed:6997283). Accepts either choline or the reaction intermediate betaine-aldehyde as substrate (PubMed:6997283). Glycine-betaine accumulates to high levels in the cytoplasm of cells to prevent dehydration and plasmolysis in adverse hyperosmotic environments (By similarity).</text>
</comment>
<comment type="catalytic activity">
    <reaction evidence="2">
        <text>choline + 2 O2 + H2O = glycine betaine + 2 H2O2 + H(+)</text>
        <dbReference type="Rhea" id="RHEA:11536"/>
        <dbReference type="ChEBI" id="CHEBI:15354"/>
        <dbReference type="ChEBI" id="CHEBI:15377"/>
        <dbReference type="ChEBI" id="CHEBI:15378"/>
        <dbReference type="ChEBI" id="CHEBI:15379"/>
        <dbReference type="ChEBI" id="CHEBI:16240"/>
        <dbReference type="ChEBI" id="CHEBI:17750"/>
        <dbReference type="EC" id="1.1.3.17"/>
    </reaction>
    <physiologicalReaction direction="left-to-right" evidence="2">
        <dbReference type="Rhea" id="RHEA:11537"/>
    </physiologicalReaction>
</comment>
<comment type="cofactor">
    <cofactor evidence="2">
        <name>FAD</name>
        <dbReference type="ChEBI" id="CHEBI:57692"/>
    </cofactor>
    <text evidence="2">Contains 1 FAD per subunit covalently linked to a His residue (PubMed:6997283).</text>
</comment>
<comment type="biophysicochemical properties">
    <kinetics>
        <KM evidence="2">6.2 mM for betaine aldehyde</KM>
        <KM evidence="2">0.87 mM for choline</KM>
        <Vmax evidence="2">12.5 umol/min/mg enzyme toward betaine aldehyde</Vmax>
        <Vmax evidence="2">13.5 umol/min/mg enzyme toward choline</Vmax>
    </kinetics>
    <phDependence>
        <text evidence="2">Optimum pH is 8.0.</text>
    </phDependence>
</comment>
<comment type="pathway">
    <text>Amine and polyamine biosynthesis; betaine biosynthesis via choline pathway; betaine from choline: step 1/1.</text>
</comment>
<comment type="caution">
    <text evidence="2">The sequence was obtained from a heptapeptide with FAD covalently attached to a His residue; Edman degradation was only able to identify Asp-Asn-Pro-Asn without identifying the positions of the Arg, His or Ser residues (PubMed:6997283).</text>
</comment>